<dbReference type="EMBL" id="AF226278">
    <property type="protein sequence ID" value="AAF73904.1"/>
    <property type="molecule type" value="Genomic_DNA"/>
</dbReference>
<dbReference type="EMBL" id="AM040265">
    <property type="protein sequence ID" value="CAJ12224.1"/>
    <property type="molecule type" value="Genomic_DNA"/>
</dbReference>
<dbReference type="SMR" id="Q2YJ82"/>
<dbReference type="STRING" id="359391.BAB2_0058"/>
<dbReference type="KEGG" id="bmf:BAB2_0058"/>
<dbReference type="PATRIC" id="fig|359391.11.peg.2006"/>
<dbReference type="HOGENOM" id="CLU_005379_3_1_5"/>
<dbReference type="BioCyc" id="MetaCyc:BAB_RS26635-MONOMER"/>
<dbReference type="Proteomes" id="UP000002719">
    <property type="component" value="Chromosome II"/>
</dbReference>
<dbReference type="GO" id="GO:0005737">
    <property type="term" value="C:cytoplasm"/>
    <property type="evidence" value="ECO:0007669"/>
    <property type="project" value="UniProtKB-SubCell"/>
</dbReference>
<dbReference type="GO" id="GO:0043684">
    <property type="term" value="C:type IV secretion system complex"/>
    <property type="evidence" value="ECO:0007669"/>
    <property type="project" value="InterPro"/>
</dbReference>
<dbReference type="GO" id="GO:0005524">
    <property type="term" value="F:ATP binding"/>
    <property type="evidence" value="ECO:0007669"/>
    <property type="project" value="UniProtKB-KW"/>
</dbReference>
<dbReference type="GO" id="GO:0016887">
    <property type="term" value="F:ATP hydrolysis activity"/>
    <property type="evidence" value="ECO:0007669"/>
    <property type="project" value="InterPro"/>
</dbReference>
<dbReference type="GO" id="GO:0044097">
    <property type="term" value="P:secretion by the type IV secretion system"/>
    <property type="evidence" value="ECO:0007669"/>
    <property type="project" value="InterPro"/>
</dbReference>
<dbReference type="CDD" id="cd01130">
    <property type="entry name" value="VirB11-like_ATPase"/>
    <property type="match status" value="1"/>
</dbReference>
<dbReference type="Gene3D" id="3.30.450.90">
    <property type="match status" value="1"/>
</dbReference>
<dbReference type="Gene3D" id="3.40.50.300">
    <property type="entry name" value="P-loop containing nucleotide triphosphate hydrolases"/>
    <property type="match status" value="1"/>
</dbReference>
<dbReference type="InterPro" id="IPR027417">
    <property type="entry name" value="P-loop_NTPase"/>
</dbReference>
<dbReference type="InterPro" id="IPR025662">
    <property type="entry name" value="Sigma_54_int_dom_ATP-bd_1"/>
</dbReference>
<dbReference type="InterPro" id="IPR001482">
    <property type="entry name" value="T2SS/T4SS_dom"/>
</dbReference>
<dbReference type="InterPro" id="IPR050921">
    <property type="entry name" value="T4SS_GSP_E_ATPase"/>
</dbReference>
<dbReference type="InterPro" id="IPR014155">
    <property type="entry name" value="VirB11"/>
</dbReference>
<dbReference type="NCBIfam" id="TIGR02788">
    <property type="entry name" value="VirB11"/>
    <property type="match status" value="1"/>
</dbReference>
<dbReference type="PANTHER" id="PTHR30486">
    <property type="entry name" value="TWITCHING MOTILITY PROTEIN PILT"/>
    <property type="match status" value="1"/>
</dbReference>
<dbReference type="PANTHER" id="PTHR30486:SF6">
    <property type="entry name" value="TYPE IV PILUS RETRACTATION ATPASE PILT"/>
    <property type="match status" value="1"/>
</dbReference>
<dbReference type="Pfam" id="PF00437">
    <property type="entry name" value="T2SSE"/>
    <property type="match status" value="1"/>
</dbReference>
<dbReference type="SUPFAM" id="SSF52540">
    <property type="entry name" value="P-loop containing nucleoside triphosphate hydrolases"/>
    <property type="match status" value="1"/>
</dbReference>
<protein>
    <recommendedName>
        <fullName>Type IV secretion system protein VirB11</fullName>
    </recommendedName>
</protein>
<comment type="function">
    <text evidence="2">The virB operon is essential for intracellular survival and is not involved in the invasion process. Constitutes a major determinant of virulence in mice. Virb11 is essential for pathogenesis in mice but is not required for intracellular survival.</text>
</comment>
<comment type="subcellular location">
    <subcellularLocation>
        <location evidence="3">Cytoplasm</location>
    </subcellularLocation>
</comment>
<comment type="miscellaneous">
    <text>Transcription is turned on at the beginning of the stationary phase of vegetative growth.</text>
</comment>
<comment type="similarity">
    <text evidence="3">Belongs to the GSP E family.</text>
</comment>
<accession>Q2YJ82</accession>
<accession>Q57A24</accession>
<accession>Q9KIS5</accession>
<sequence>MMSNRSDFIVPDEAAVKRAASVNFHLEPLRPWLDDPQITEVCVNRPGEVFCERASAWEYYAVPNLDYEHLISLGTATARFVDQDISDSRPVLSAILPMGERIQIVRPPACEHGTISVTIRKPSFTRRTLEDYAQQGFFKHVRPMSKSLTPFEQELLALKEAGDYMSFLRRAVQLERVIVVAGETGSGKTTLMKALMQEIPFDQRLITIEDVPELFLPDHPNHVHLFYPSEAKEEENAPVTAATLLRSCLRMKPTRILLAELRGGETYDFINVAASGHGGSITSCHAGSCELTFERLALMVLQNRQGRQLPYEIIRRLLYLVVDVVVHVHNGVHDGTGRHISEVWYDPNTKRALSLQHSEKTQ</sequence>
<feature type="chain" id="PRO_0000291436" description="Type IV secretion system protein VirB11">
    <location>
        <begin position="1"/>
        <end position="362"/>
    </location>
</feature>
<feature type="binding site" evidence="1">
    <location>
        <begin position="182"/>
        <end position="189"/>
    </location>
    <ligand>
        <name>ATP</name>
        <dbReference type="ChEBI" id="CHEBI:30616"/>
    </ligand>
</feature>
<name>VIRBB_BRUA2</name>
<reference key="1">
    <citation type="journal article" date="2000" name="J. Bacteriol.">
        <title>A homologue of an operon required for DNA transfer in Agrobacterium is required in Brucella abortus for virulence and intracellular multiplication.</title>
        <authorList>
            <person name="Sieira R."/>
            <person name="Comerci D.J."/>
            <person name="Sanchez D.O."/>
            <person name="Ugalde R.A."/>
        </authorList>
    </citation>
    <scope>NUCLEOTIDE SEQUENCE [GENOMIC DNA]</scope>
    <scope>TRANSCRIPTION</scope>
    <scope>FUNCTION</scope>
</reference>
<reference key="2">
    <citation type="journal article" date="2005" name="Infect. Immun.">
        <title>Whole-genome analyses of speciation events in pathogenic Brucellae.</title>
        <authorList>
            <person name="Chain P.S."/>
            <person name="Comerci D.J."/>
            <person name="Tolmasky M.E."/>
            <person name="Larimer F.W."/>
            <person name="Malfatti S.A."/>
            <person name="Vergez L.M."/>
            <person name="Aguero F."/>
            <person name="Land M.L."/>
            <person name="Ugalde R.A."/>
            <person name="Garcia E."/>
        </authorList>
    </citation>
    <scope>NUCLEOTIDE SEQUENCE [LARGE SCALE GENOMIC DNA]</scope>
    <source>
        <strain>2308</strain>
    </source>
</reference>
<keyword id="KW-0067">ATP-binding</keyword>
<keyword id="KW-0963">Cytoplasm</keyword>
<keyword id="KW-0547">Nucleotide-binding</keyword>
<keyword id="KW-1185">Reference proteome</keyword>
<keyword id="KW-0843">Virulence</keyword>
<proteinExistence type="inferred from homology"/>
<gene>
    <name type="primary">virB11</name>
    <name type="ordered locus">BAB2_0058</name>
</gene>
<evidence type="ECO:0000255" key="1"/>
<evidence type="ECO:0000269" key="2">
    <source>
    </source>
</evidence>
<evidence type="ECO:0000305" key="3"/>
<organism>
    <name type="scientific">Brucella abortus (strain 2308)</name>
    <dbReference type="NCBI Taxonomy" id="359391"/>
    <lineage>
        <taxon>Bacteria</taxon>
        <taxon>Pseudomonadati</taxon>
        <taxon>Pseudomonadota</taxon>
        <taxon>Alphaproteobacteria</taxon>
        <taxon>Hyphomicrobiales</taxon>
        <taxon>Brucellaceae</taxon>
        <taxon>Brucella/Ochrobactrum group</taxon>
        <taxon>Brucella</taxon>
    </lineage>
</organism>